<gene>
    <name type="primary">MATA1</name>
</gene>
<gene>
    <name type="primary">HMRA1</name>
</gene>
<proteinExistence type="inferred from homology"/>
<sequence>MNVQEIHNIREACITILSGTKHNSVLFEPCDKFDEVINSLDIDPDSKETLRRSVSLLVGTRNHKRGCNIDKKTKDMLNKVYEQKQYLTKEEREFVAKKCNLTPLQVRVWFANKRIRNKNTKM</sequence>
<evidence type="ECO:0000250" key="1"/>
<evidence type="ECO:0000255" key="2">
    <source>
        <dbReference type="PROSITE-ProRule" id="PRU00108"/>
    </source>
</evidence>
<evidence type="ECO:0000305" key="3"/>
<keyword id="KW-0238">DNA-binding</keyword>
<keyword id="KW-0371">Homeobox</keyword>
<keyword id="KW-0539">Nucleus</keyword>
<keyword id="KW-0678">Repressor</keyword>
<keyword id="KW-0804">Transcription</keyword>
<keyword id="KW-0805">Transcription regulation</keyword>
<accession>Q708A1</accession>
<dbReference type="EMBL" id="AJ617302">
    <property type="protein sequence ID" value="CAE84400.1"/>
    <property type="molecule type" value="Genomic_DNA"/>
</dbReference>
<dbReference type="EMBL" id="AJ617303">
    <property type="protein sequence ID" value="CAE84408.1"/>
    <property type="molecule type" value="Genomic_DNA"/>
</dbReference>
<dbReference type="SMR" id="Q708A1"/>
<dbReference type="GO" id="GO:0005634">
    <property type="term" value="C:nucleus"/>
    <property type="evidence" value="ECO:0007669"/>
    <property type="project" value="UniProtKB-SubCell"/>
</dbReference>
<dbReference type="GO" id="GO:0003677">
    <property type="term" value="F:DNA binding"/>
    <property type="evidence" value="ECO:0007669"/>
    <property type="project" value="UniProtKB-KW"/>
</dbReference>
<dbReference type="GO" id="GO:0000981">
    <property type="term" value="F:DNA-binding transcription factor activity, RNA polymerase II-specific"/>
    <property type="evidence" value="ECO:0007669"/>
    <property type="project" value="InterPro"/>
</dbReference>
<dbReference type="CDD" id="cd00086">
    <property type="entry name" value="homeodomain"/>
    <property type="match status" value="1"/>
</dbReference>
<dbReference type="Gene3D" id="1.10.10.60">
    <property type="entry name" value="Homeodomain-like"/>
    <property type="match status" value="1"/>
</dbReference>
<dbReference type="InterPro" id="IPR001356">
    <property type="entry name" value="HD"/>
</dbReference>
<dbReference type="InterPro" id="IPR017970">
    <property type="entry name" value="Homeobox_CS"/>
</dbReference>
<dbReference type="InterPro" id="IPR009057">
    <property type="entry name" value="Homeodomain-like_sf"/>
</dbReference>
<dbReference type="Pfam" id="PF00046">
    <property type="entry name" value="Homeodomain"/>
    <property type="match status" value="1"/>
</dbReference>
<dbReference type="SMART" id="SM00389">
    <property type="entry name" value="HOX"/>
    <property type="match status" value="1"/>
</dbReference>
<dbReference type="SUPFAM" id="SSF46689">
    <property type="entry name" value="Homeodomain-like"/>
    <property type="match status" value="1"/>
</dbReference>
<dbReference type="PROSITE" id="PS00027">
    <property type="entry name" value="HOMEOBOX_1"/>
    <property type="match status" value="1"/>
</dbReference>
<dbReference type="PROSITE" id="PS50071">
    <property type="entry name" value="HOMEOBOX_2"/>
    <property type="match status" value="1"/>
</dbReference>
<feature type="chain" id="PRO_0000049177" description="Mating-type protein A1">
    <location>
        <begin position="1"/>
        <end position="122"/>
    </location>
</feature>
<feature type="DNA-binding region" description="Homeobox" evidence="2">
    <location>
        <begin position="62"/>
        <end position="121"/>
    </location>
</feature>
<comment type="function">
    <text evidence="1">Mating type proteins are sequence specific DNA-binding proteins that act as master switches in yeast differentiation by controlling gene expression in a cell type-specific fashion. Transcriptional corepressor that acts in conjunction with ALPHA2 to repress transcription of haploid-specific genes and of MATALPHA1 (By similarity).</text>
</comment>
<comment type="subunit">
    <text evidence="1">Forms a heterodimer with ALPHA2.</text>
</comment>
<comment type="subcellular location">
    <subcellularLocation>
        <location evidence="2">Nucleus</location>
    </subcellularLocation>
</comment>
<comment type="miscellaneous">
    <text>There are three genetic loci for mating type genes in K.delphensis. MAT is the expression locus that determines the mating type of the cell, whereas HML (containing HMLALPHA1 and HMLALPHA2) and HMR (containing HMRA1) represent silenced repositories of mating type information. The mating type is determined by the MAT locus, which contains either a copy of HML or of HMR. Diploid cells are usually heterozygous for the MAT locus.</text>
</comment>
<comment type="similarity">
    <text evidence="3">Belongs to the MATA1 family.</text>
</comment>
<organism>
    <name type="scientific">Nakaseomyces delphensis</name>
    <name type="common">Yeast</name>
    <name type="synonym">Kluyveromyces delphensis</name>
    <dbReference type="NCBI Taxonomy" id="51657"/>
    <lineage>
        <taxon>Eukaryota</taxon>
        <taxon>Fungi</taxon>
        <taxon>Dikarya</taxon>
        <taxon>Ascomycota</taxon>
        <taxon>Saccharomycotina</taxon>
        <taxon>Saccharomycetes</taxon>
        <taxon>Saccharomycetales</taxon>
        <taxon>Saccharomycetaceae</taxon>
        <taxon>Nakaseomyces</taxon>
    </lineage>
</organism>
<reference key="1">
    <citation type="journal article" date="2004" name="Proc. Natl. Acad. Sci. U.S.A.">
        <title>Evolution of the MAT locus and its Ho endonuclease in yeast species.</title>
        <authorList>
            <person name="Butler G."/>
            <person name="Kenny C."/>
            <person name="Fagan A."/>
            <person name="Kurischko C."/>
            <person name="Gaillardin C."/>
            <person name="Wolfe K.H."/>
        </authorList>
    </citation>
    <scope>NUCLEOTIDE SEQUENCE [GENOMIC DNA]</scope>
    <source>
        <strain>ATCC 24205 / CBS 2170 / NBRC 10602 / NRRL Y-2379 / UCD 56-2</strain>
    </source>
</reference>
<protein>
    <recommendedName>
        <fullName>Mating-type protein A1</fullName>
    </recommendedName>
    <alternativeName>
        <fullName>MATa1 transcription factor</fullName>
    </alternativeName>
</protein>
<name>MATA1_NAKDE</name>